<accession>Q05147</accession>
<feature type="chain" id="PRO_0000082649" description="GTPase KRas">
    <location>
        <begin position="1"/>
        <end position="184"/>
    </location>
</feature>
<feature type="propeptide" id="PRO_0000281299" description="Removed in mature form" evidence="1">
    <location>
        <begin position="185"/>
        <end position="187"/>
    </location>
</feature>
<feature type="region of interest" description="Disordered" evidence="2">
    <location>
        <begin position="168"/>
        <end position="187"/>
    </location>
</feature>
<feature type="short sequence motif" description="Effector region">
    <location>
        <begin position="32"/>
        <end position="40"/>
    </location>
</feature>
<feature type="binding site" evidence="1">
    <location>
        <begin position="10"/>
        <end position="18"/>
    </location>
    <ligand>
        <name>GTP</name>
        <dbReference type="ChEBI" id="CHEBI:37565"/>
    </ligand>
</feature>
<feature type="binding site" evidence="1">
    <location>
        <begin position="29"/>
        <end position="35"/>
    </location>
    <ligand>
        <name>GTP</name>
        <dbReference type="ChEBI" id="CHEBI:37565"/>
    </ligand>
</feature>
<feature type="binding site" evidence="1">
    <location>
        <begin position="59"/>
        <end position="60"/>
    </location>
    <ligand>
        <name>GTP</name>
        <dbReference type="ChEBI" id="CHEBI:37565"/>
    </ligand>
</feature>
<feature type="binding site" evidence="1">
    <location>
        <begin position="116"/>
        <end position="119"/>
    </location>
    <ligand>
        <name>GTP</name>
        <dbReference type="ChEBI" id="CHEBI:37565"/>
    </ligand>
</feature>
<feature type="modified residue" description="Cysteine methyl ester" evidence="1">
    <location>
        <position position="184"/>
    </location>
</feature>
<feature type="lipid moiety-binding region" description="S-farnesyl cysteine" evidence="1">
    <location>
        <position position="184"/>
    </location>
</feature>
<name>RASK_XENLA</name>
<dbReference type="EC" id="3.6.5.2" evidence="1"/>
<dbReference type="EMBL" id="X53246">
    <property type="protein sequence ID" value="CAA37336.1"/>
    <property type="molecule type" value="mRNA"/>
</dbReference>
<dbReference type="PIR" id="A60192">
    <property type="entry name" value="A60192"/>
</dbReference>
<dbReference type="RefSeq" id="NP_001095209.1">
    <property type="nucleotide sequence ID" value="NM_001101739.1"/>
</dbReference>
<dbReference type="BMRB" id="Q05147"/>
<dbReference type="SMR" id="Q05147"/>
<dbReference type="Proteomes" id="UP000186698">
    <property type="component" value="Unplaced"/>
</dbReference>
<dbReference type="GO" id="GO:0005737">
    <property type="term" value="C:cytoplasm"/>
    <property type="evidence" value="ECO:0000250"/>
    <property type="project" value="UniProtKB"/>
</dbReference>
<dbReference type="GO" id="GO:0009898">
    <property type="term" value="C:cytoplasmic side of plasma membrane"/>
    <property type="evidence" value="ECO:0000250"/>
    <property type="project" value="UniProtKB"/>
</dbReference>
<dbReference type="GO" id="GO:0005886">
    <property type="term" value="C:plasma membrane"/>
    <property type="evidence" value="ECO:0000318"/>
    <property type="project" value="GO_Central"/>
</dbReference>
<dbReference type="GO" id="GO:0003925">
    <property type="term" value="F:G protein activity"/>
    <property type="evidence" value="ECO:0007669"/>
    <property type="project" value="UniProtKB-EC"/>
</dbReference>
<dbReference type="GO" id="GO:0019003">
    <property type="term" value="F:GDP binding"/>
    <property type="evidence" value="ECO:0000318"/>
    <property type="project" value="GO_Central"/>
</dbReference>
<dbReference type="GO" id="GO:0005525">
    <property type="term" value="F:GTP binding"/>
    <property type="evidence" value="ECO:0000318"/>
    <property type="project" value="GO_Central"/>
</dbReference>
<dbReference type="GO" id="GO:0003924">
    <property type="term" value="F:GTPase activity"/>
    <property type="evidence" value="ECO:0000318"/>
    <property type="project" value="GO_Central"/>
</dbReference>
<dbReference type="GO" id="GO:0007265">
    <property type="term" value="P:Ras protein signal transduction"/>
    <property type="evidence" value="ECO:0000318"/>
    <property type="project" value="GO_Central"/>
</dbReference>
<dbReference type="CDD" id="cd04138">
    <property type="entry name" value="H_N_K_Ras_like"/>
    <property type="match status" value="1"/>
</dbReference>
<dbReference type="FunFam" id="3.40.50.300:FF:000096">
    <property type="entry name" value="KRAS proto-oncogene, GTPase"/>
    <property type="match status" value="1"/>
</dbReference>
<dbReference type="Gene3D" id="3.40.50.300">
    <property type="entry name" value="P-loop containing nucleotide triphosphate hydrolases"/>
    <property type="match status" value="1"/>
</dbReference>
<dbReference type="InterPro" id="IPR027417">
    <property type="entry name" value="P-loop_NTPase"/>
</dbReference>
<dbReference type="InterPro" id="IPR005225">
    <property type="entry name" value="Small_GTP-bd"/>
</dbReference>
<dbReference type="InterPro" id="IPR001806">
    <property type="entry name" value="Small_GTPase"/>
</dbReference>
<dbReference type="InterPro" id="IPR020849">
    <property type="entry name" value="Small_GTPase_Ras-type"/>
</dbReference>
<dbReference type="NCBIfam" id="TIGR00231">
    <property type="entry name" value="small_GTP"/>
    <property type="match status" value="1"/>
</dbReference>
<dbReference type="PANTHER" id="PTHR24070">
    <property type="entry name" value="RAS, DI-RAS, AND RHEB FAMILY MEMBERS OF SMALL GTPASE SUPERFAMILY"/>
    <property type="match status" value="1"/>
</dbReference>
<dbReference type="Pfam" id="PF00071">
    <property type="entry name" value="Ras"/>
    <property type="match status" value="1"/>
</dbReference>
<dbReference type="PRINTS" id="PR00449">
    <property type="entry name" value="RASTRNSFRMNG"/>
</dbReference>
<dbReference type="SMART" id="SM00175">
    <property type="entry name" value="RAB"/>
    <property type="match status" value="1"/>
</dbReference>
<dbReference type="SMART" id="SM00173">
    <property type="entry name" value="RAS"/>
    <property type="match status" value="1"/>
</dbReference>
<dbReference type="SMART" id="SM00174">
    <property type="entry name" value="RHO"/>
    <property type="match status" value="1"/>
</dbReference>
<dbReference type="SUPFAM" id="SSF52540">
    <property type="entry name" value="P-loop containing nucleoside triphosphate hydrolases"/>
    <property type="match status" value="1"/>
</dbReference>
<dbReference type="PROSITE" id="PS51421">
    <property type="entry name" value="RAS"/>
    <property type="match status" value="1"/>
</dbReference>
<evidence type="ECO:0000250" key="1">
    <source>
        <dbReference type="UniProtKB" id="P01116"/>
    </source>
</evidence>
<evidence type="ECO:0000256" key="2">
    <source>
        <dbReference type="SAM" id="MobiDB-lite"/>
    </source>
</evidence>
<evidence type="ECO:0000305" key="3"/>
<organism>
    <name type="scientific">Xenopus laevis</name>
    <name type="common">African clawed frog</name>
    <dbReference type="NCBI Taxonomy" id="8355"/>
    <lineage>
        <taxon>Eukaryota</taxon>
        <taxon>Metazoa</taxon>
        <taxon>Chordata</taxon>
        <taxon>Craniata</taxon>
        <taxon>Vertebrata</taxon>
        <taxon>Euteleostomi</taxon>
        <taxon>Amphibia</taxon>
        <taxon>Batrachia</taxon>
        <taxon>Anura</taxon>
        <taxon>Pipoidea</taxon>
        <taxon>Pipidae</taxon>
        <taxon>Xenopodinae</taxon>
        <taxon>Xenopus</taxon>
        <taxon>Xenopus</taxon>
    </lineage>
</organism>
<comment type="function">
    <text evidence="1">Ras proteins bind GDP/GTP and possess intrinsic GTPase activity (By similarity). Plays an important role in the regulation of cell proliferation.</text>
</comment>
<comment type="catalytic activity">
    <reaction evidence="1">
        <text>GTP + H2O = GDP + phosphate + H(+)</text>
        <dbReference type="Rhea" id="RHEA:19669"/>
        <dbReference type="ChEBI" id="CHEBI:15377"/>
        <dbReference type="ChEBI" id="CHEBI:15378"/>
        <dbReference type="ChEBI" id="CHEBI:37565"/>
        <dbReference type="ChEBI" id="CHEBI:43474"/>
        <dbReference type="ChEBI" id="CHEBI:58189"/>
        <dbReference type="EC" id="3.6.5.2"/>
    </reaction>
</comment>
<comment type="activity regulation">
    <text evidence="1">Alternates between an inactive form bound to GDP and an active form bound to GTP (By similarity). Activated by a guanine nucleotide-exchange factor (GEF) and inactivated by a GTPase-activating protein (GAP) (By similarity).</text>
</comment>
<comment type="subcellular location">
    <subcellularLocation>
        <location evidence="1">Cell membrane</location>
        <topology evidence="1">Lipid-anchor</topology>
        <orientation evidence="1">Cytoplasmic side</orientation>
    </subcellularLocation>
    <subcellularLocation>
        <location evidence="1">Cytoplasm</location>
    </subcellularLocation>
</comment>
<comment type="similarity">
    <text evidence="3">Belongs to the small GTPase superfamily. Ras family.</text>
</comment>
<keyword id="KW-1003">Cell membrane</keyword>
<keyword id="KW-0963">Cytoplasm</keyword>
<keyword id="KW-0342">GTP-binding</keyword>
<keyword id="KW-0378">Hydrolase</keyword>
<keyword id="KW-0449">Lipoprotein</keyword>
<keyword id="KW-0472">Membrane</keyword>
<keyword id="KW-0488">Methylation</keyword>
<keyword id="KW-0547">Nucleotide-binding</keyword>
<keyword id="KW-0636">Prenylation</keyword>
<keyword id="KW-1185">Reference proteome</keyword>
<proteinExistence type="evidence at transcript level"/>
<reference key="1">
    <citation type="journal article" date="1990" name="Oncogene">
        <title>K-ras oncogene expression in Xenopus laevis.</title>
        <authorList>
            <person name="Baum E.Z."/>
            <person name="Bebernitz G.A."/>
        </authorList>
    </citation>
    <scope>NUCLEOTIDE SEQUENCE [MRNA]</scope>
</reference>
<protein>
    <recommendedName>
        <fullName>GTPase KRas</fullName>
        <ecNumber evidence="1">3.6.5.2</ecNumber>
    </recommendedName>
    <alternativeName>
        <fullName>Ki-Ras</fullName>
        <shortName>K-ras</shortName>
    </alternativeName>
</protein>
<sequence>MTEYKLVVVGAVGVGKSALTIQLIQNHFVDEYDPTIEDSYRKQVVIDGETCLLDILDTAGQEEYSAMRDQYMRTGEGFLCVFAINNIKSFEDIHHYREQIKRVKDSEDVPMVLVGNKCALPSRTVDTKQAQDLARSYGIPFIETSAKTRQGVDDAFYTLVREIRKHKEKMSKDGKKKKKSKTKCSIL</sequence>
<gene>
    <name type="primary">kras</name>
</gene>